<feature type="signal peptide" evidence="4">
    <location>
        <begin position="1"/>
        <end position="21"/>
    </location>
</feature>
<feature type="chain" id="PRO_0000354681" description="Protein kinase C-binding protein NELL2">
    <location>
        <begin position="22"/>
        <end position="816"/>
    </location>
</feature>
<feature type="domain" description="Laminin G-like">
    <location>
        <begin position="30"/>
        <end position="258"/>
    </location>
</feature>
<feature type="domain" description="VWFC 1" evidence="7">
    <location>
        <begin position="272"/>
        <end position="331"/>
    </location>
</feature>
<feature type="domain" description="EGF-like 1" evidence="6">
    <location>
        <begin position="397"/>
        <end position="439"/>
    </location>
</feature>
<feature type="domain" description="EGF-like 2; calcium-binding" evidence="6">
    <location>
        <begin position="440"/>
        <end position="481"/>
    </location>
</feature>
<feature type="domain" description="EGF-like 3; calcium-binding" evidence="6">
    <location>
        <begin position="482"/>
        <end position="522"/>
    </location>
</feature>
<feature type="domain" description="EGF-like 4" evidence="6">
    <location>
        <begin position="523"/>
        <end position="553"/>
    </location>
</feature>
<feature type="domain" description="EGF-like 5; calcium-binding" evidence="6">
    <location>
        <begin position="555"/>
        <end position="601"/>
    </location>
</feature>
<feature type="domain" description="EGF-like 6; calcium-binding" evidence="6">
    <location>
        <begin position="602"/>
        <end position="637"/>
    </location>
</feature>
<feature type="domain" description="VWFC 2" evidence="7">
    <location>
        <begin position="638"/>
        <end position="693"/>
    </location>
</feature>
<feature type="domain" description="VWFC 3" evidence="7">
    <location>
        <begin position="698"/>
        <end position="756"/>
    </location>
</feature>
<feature type="binding site" evidence="4">
    <location>
        <position position="440"/>
    </location>
    <ligand>
        <name>Ca(2+)</name>
        <dbReference type="ChEBI" id="CHEBI:29108"/>
    </ligand>
</feature>
<feature type="binding site" evidence="4">
    <location>
        <position position="441"/>
    </location>
    <ligand>
        <name>Ca(2+)</name>
        <dbReference type="ChEBI" id="CHEBI:29108"/>
    </ligand>
</feature>
<feature type="binding site" evidence="4">
    <location>
        <position position="443"/>
    </location>
    <ligand>
        <name>Ca(2+)</name>
        <dbReference type="ChEBI" id="CHEBI:29108"/>
    </ligand>
</feature>
<feature type="binding site" evidence="4">
    <location>
        <position position="459"/>
    </location>
    <ligand>
        <name>Ca(2+)</name>
        <dbReference type="ChEBI" id="CHEBI:29108"/>
    </ligand>
</feature>
<feature type="binding site" evidence="4">
    <location>
        <position position="460"/>
    </location>
    <ligand>
        <name>Ca(2+)</name>
        <dbReference type="ChEBI" id="CHEBI:29108"/>
    </ligand>
</feature>
<feature type="binding site" evidence="4">
    <location>
        <position position="463"/>
    </location>
    <ligand>
        <name>Ca(2+)</name>
        <dbReference type="ChEBI" id="CHEBI:29108"/>
    </ligand>
</feature>
<feature type="binding site" evidence="4">
    <location>
        <position position="555"/>
    </location>
    <ligand>
        <name>Ca(2+)</name>
        <dbReference type="ChEBI" id="CHEBI:29108"/>
    </ligand>
</feature>
<feature type="binding site" evidence="4">
    <location>
        <position position="556"/>
    </location>
    <ligand>
        <name>Ca(2+)</name>
        <dbReference type="ChEBI" id="CHEBI:29108"/>
    </ligand>
</feature>
<feature type="binding site" evidence="4">
    <location>
        <position position="558"/>
    </location>
    <ligand>
        <name>Ca(2+)</name>
        <dbReference type="ChEBI" id="CHEBI:29108"/>
    </ligand>
</feature>
<feature type="binding site" evidence="4">
    <location>
        <position position="574"/>
    </location>
    <ligand>
        <name>Ca(2+)</name>
        <dbReference type="ChEBI" id="CHEBI:29108"/>
    </ligand>
</feature>
<feature type="binding site" evidence="4">
    <location>
        <position position="575"/>
    </location>
    <ligand>
        <name>Ca(2+)</name>
        <dbReference type="ChEBI" id="CHEBI:29108"/>
    </ligand>
</feature>
<feature type="binding site" evidence="4">
    <location>
        <position position="578"/>
    </location>
    <ligand>
        <name>Ca(2+)</name>
        <dbReference type="ChEBI" id="CHEBI:29108"/>
    </ligand>
</feature>
<feature type="binding site" evidence="4">
    <location>
        <position position="602"/>
    </location>
    <ligand>
        <name>Ca(2+)</name>
        <dbReference type="ChEBI" id="CHEBI:29108"/>
    </ligand>
</feature>
<feature type="binding site" evidence="4">
    <location>
        <position position="603"/>
    </location>
    <ligand>
        <name>Ca(2+)</name>
        <dbReference type="ChEBI" id="CHEBI:29108"/>
    </ligand>
</feature>
<feature type="binding site" evidence="4">
    <location>
        <position position="605"/>
    </location>
    <ligand>
        <name>Ca(2+)</name>
        <dbReference type="ChEBI" id="CHEBI:29108"/>
    </ligand>
</feature>
<feature type="binding site" evidence="4">
    <location>
        <position position="621"/>
    </location>
    <ligand>
        <name>Ca(2+)</name>
        <dbReference type="ChEBI" id="CHEBI:29108"/>
    </ligand>
</feature>
<feature type="binding site" evidence="4">
    <location>
        <position position="622"/>
    </location>
    <ligand>
        <name>Ca(2+)</name>
        <dbReference type="ChEBI" id="CHEBI:29108"/>
    </ligand>
</feature>
<feature type="binding site" evidence="4">
    <location>
        <position position="625"/>
    </location>
    <ligand>
        <name>Ca(2+)</name>
        <dbReference type="ChEBI" id="CHEBI:29108"/>
    </ligand>
</feature>
<feature type="glycosylation site" description="N-linked (GlcNAc...) asparagine" evidence="5">
    <location>
        <position position="53"/>
    </location>
</feature>
<feature type="glycosylation site" description="N-linked (GlcNAc...) asparagine" evidence="5">
    <location>
        <position position="225"/>
    </location>
</feature>
<feature type="glycosylation site" description="N-linked (GlcNAc...) asparagine" evidence="5">
    <location>
        <position position="293"/>
    </location>
</feature>
<feature type="glycosylation site" description="N-linked (GlcNAc...) asparagine" evidence="5">
    <location>
        <position position="298"/>
    </location>
</feature>
<feature type="glycosylation site" description="N-linked (GlcNAc...) asparagine" evidence="4">
    <location>
        <position position="517"/>
    </location>
</feature>
<feature type="glycosylation site" description="O-linked (GlcNAc...) threonine" evidence="4">
    <location>
        <position position="548"/>
    </location>
</feature>
<feature type="glycosylation site" description="N-linked (GlcNAc...) asparagine" evidence="5">
    <location>
        <position position="615"/>
    </location>
</feature>
<feature type="glycosylation site" description="N-linked (GlcNAc...) asparagine" evidence="5">
    <location>
        <position position="635"/>
    </location>
</feature>
<feature type="disulfide bond" evidence="4">
    <location>
        <begin position="401"/>
        <end position="413"/>
    </location>
</feature>
<feature type="disulfide bond" evidence="4">
    <location>
        <begin position="407"/>
        <end position="422"/>
    </location>
</feature>
<feature type="disulfide bond" evidence="4">
    <location>
        <begin position="424"/>
        <end position="438"/>
    </location>
</feature>
<feature type="disulfide bond" evidence="4">
    <location>
        <begin position="444"/>
        <end position="457"/>
    </location>
</feature>
<feature type="disulfide bond" evidence="4">
    <location>
        <begin position="451"/>
        <end position="466"/>
    </location>
</feature>
<feature type="disulfide bond" evidence="4">
    <location>
        <begin position="468"/>
        <end position="480"/>
    </location>
</feature>
<feature type="disulfide bond" evidence="4">
    <location>
        <begin position="486"/>
        <end position="499"/>
    </location>
</feature>
<feature type="disulfide bond" evidence="4">
    <location>
        <begin position="493"/>
        <end position="508"/>
    </location>
</feature>
<feature type="disulfide bond" evidence="4">
    <location>
        <begin position="510"/>
        <end position="521"/>
    </location>
</feature>
<feature type="disulfide bond" evidence="4">
    <location>
        <begin position="525"/>
        <end position="535"/>
    </location>
</feature>
<feature type="disulfide bond" evidence="4">
    <location>
        <begin position="529"/>
        <end position="541"/>
    </location>
</feature>
<feature type="disulfide bond" evidence="4">
    <location>
        <begin position="543"/>
        <end position="552"/>
    </location>
</feature>
<feature type="disulfide bond" evidence="4">
    <location>
        <begin position="559"/>
        <end position="572"/>
    </location>
</feature>
<feature type="disulfide bond" evidence="4">
    <location>
        <begin position="566"/>
        <end position="581"/>
    </location>
</feature>
<feature type="disulfide bond" evidence="4">
    <location>
        <begin position="583"/>
        <end position="600"/>
    </location>
</feature>
<feature type="disulfide bond" evidence="4">
    <location>
        <begin position="606"/>
        <end position="619"/>
    </location>
</feature>
<feature type="disulfide bond" evidence="4">
    <location>
        <begin position="613"/>
        <end position="628"/>
    </location>
</feature>
<feature type="disulfide bond" evidence="4">
    <location>
        <begin position="630"/>
        <end position="636"/>
    </location>
</feature>
<gene>
    <name type="primary">NELL2</name>
</gene>
<proteinExistence type="evidence at transcript level"/>
<dbReference type="EMBL" id="BC150070">
    <property type="protein sequence ID" value="AAI50071.1"/>
    <property type="molecule type" value="mRNA"/>
</dbReference>
<dbReference type="RefSeq" id="NP_001095554.1">
    <property type="nucleotide sequence ID" value="NM_001102084.1"/>
</dbReference>
<dbReference type="RefSeq" id="XP_005206438.1">
    <property type="nucleotide sequence ID" value="XM_005206381.3"/>
</dbReference>
<dbReference type="RefSeq" id="XP_005206439.1">
    <property type="nucleotide sequence ID" value="XM_005206382.5"/>
</dbReference>
<dbReference type="RefSeq" id="XP_024847579.1">
    <property type="nucleotide sequence ID" value="XM_024991811.2"/>
</dbReference>
<dbReference type="RefSeq" id="XP_059742460.1">
    <property type="nucleotide sequence ID" value="XM_059886477.1"/>
</dbReference>
<dbReference type="SMR" id="A6QR11"/>
<dbReference type="FunCoup" id="A6QR11">
    <property type="interactions" value="757"/>
</dbReference>
<dbReference type="STRING" id="9913.ENSBTAP00000042993"/>
<dbReference type="GlyCosmos" id="A6QR11">
    <property type="glycosylation" value="7 sites, No reported glycans"/>
</dbReference>
<dbReference type="GlyGen" id="A6QR11">
    <property type="glycosylation" value="8 sites"/>
</dbReference>
<dbReference type="PaxDb" id="9913-ENSBTAP00000042993"/>
<dbReference type="GeneID" id="524622"/>
<dbReference type="KEGG" id="bta:524622"/>
<dbReference type="CTD" id="4753"/>
<dbReference type="VEuPathDB" id="HostDB:ENSBTAG00000032183"/>
<dbReference type="eggNOG" id="KOG1217">
    <property type="taxonomic scope" value="Eukaryota"/>
</dbReference>
<dbReference type="HOGENOM" id="CLU_006887_0_0_1"/>
<dbReference type="InParanoid" id="A6QR11"/>
<dbReference type="OMA" id="PENECCQ"/>
<dbReference type="OrthoDB" id="6516201at2759"/>
<dbReference type="TreeFam" id="TF323325"/>
<dbReference type="Proteomes" id="UP000009136">
    <property type="component" value="Chromosome 5"/>
</dbReference>
<dbReference type="Bgee" id="ENSBTAG00000032183">
    <property type="expression patterns" value="Expressed in Ammon's horn and 82 other cell types or tissues"/>
</dbReference>
<dbReference type="GO" id="GO:0005737">
    <property type="term" value="C:cytoplasm"/>
    <property type="evidence" value="ECO:0000318"/>
    <property type="project" value="GO_Central"/>
</dbReference>
<dbReference type="GO" id="GO:0005576">
    <property type="term" value="C:extracellular region"/>
    <property type="evidence" value="ECO:0000250"/>
    <property type="project" value="UniProtKB"/>
</dbReference>
<dbReference type="GO" id="GO:0005615">
    <property type="term" value="C:extracellular space"/>
    <property type="evidence" value="ECO:0000318"/>
    <property type="project" value="GO_Central"/>
</dbReference>
<dbReference type="GO" id="GO:0005509">
    <property type="term" value="F:calcium ion binding"/>
    <property type="evidence" value="ECO:0000250"/>
    <property type="project" value="UniProtKB"/>
</dbReference>
<dbReference type="GO" id="GO:0008201">
    <property type="term" value="F:heparin binding"/>
    <property type="evidence" value="ECO:0000318"/>
    <property type="project" value="GO_Central"/>
</dbReference>
<dbReference type="GO" id="GO:0005080">
    <property type="term" value="F:protein kinase C binding"/>
    <property type="evidence" value="ECO:0000318"/>
    <property type="project" value="GO_Central"/>
</dbReference>
<dbReference type="GO" id="GO:0071679">
    <property type="term" value="P:commissural neuron axon guidance"/>
    <property type="evidence" value="ECO:0000250"/>
    <property type="project" value="UniProtKB"/>
</dbReference>
<dbReference type="GO" id="GO:0009566">
    <property type="term" value="P:fertilization"/>
    <property type="evidence" value="ECO:0000250"/>
    <property type="project" value="UniProtKB"/>
</dbReference>
<dbReference type="CDD" id="cd00054">
    <property type="entry name" value="EGF_CA"/>
    <property type="match status" value="3"/>
</dbReference>
<dbReference type="CDD" id="cd00110">
    <property type="entry name" value="LamG"/>
    <property type="match status" value="1"/>
</dbReference>
<dbReference type="FunFam" id="2.10.25.10:FF:000121">
    <property type="entry name" value="Neural EGFL like 2"/>
    <property type="match status" value="1"/>
</dbReference>
<dbReference type="FunFam" id="2.10.25.10:FF:000120">
    <property type="entry name" value="Protein kinase C-binding protein NELL1"/>
    <property type="match status" value="1"/>
</dbReference>
<dbReference type="FunFam" id="2.10.25.10:FF:000211">
    <property type="entry name" value="Protein kinase C-binding protein NELL1"/>
    <property type="match status" value="1"/>
</dbReference>
<dbReference type="FunFam" id="2.60.120.200:FF:000015">
    <property type="entry name" value="protein kinase C-binding protein NELL1"/>
    <property type="match status" value="1"/>
</dbReference>
<dbReference type="FunFam" id="2.10.25.10:FF:000102">
    <property type="entry name" value="Protein kinase C-binding protein NELL2"/>
    <property type="match status" value="1"/>
</dbReference>
<dbReference type="FunFam" id="2.10.25.10:FF:000111">
    <property type="entry name" value="Protein kinase C-binding protein NELL2"/>
    <property type="match status" value="1"/>
</dbReference>
<dbReference type="FunFam" id="2.10.70.10:FF:000023">
    <property type="entry name" value="protein kinase C-binding protein NELL2"/>
    <property type="match status" value="1"/>
</dbReference>
<dbReference type="Gene3D" id="2.60.120.200">
    <property type="match status" value="1"/>
</dbReference>
<dbReference type="Gene3D" id="6.20.200.20">
    <property type="match status" value="2"/>
</dbReference>
<dbReference type="Gene3D" id="2.10.70.10">
    <property type="entry name" value="Complement Module, domain 1"/>
    <property type="match status" value="1"/>
</dbReference>
<dbReference type="Gene3D" id="2.10.25.10">
    <property type="entry name" value="Laminin"/>
    <property type="match status" value="6"/>
</dbReference>
<dbReference type="InterPro" id="IPR013320">
    <property type="entry name" value="ConA-like_dom_sf"/>
</dbReference>
<dbReference type="InterPro" id="IPR001881">
    <property type="entry name" value="EGF-like_Ca-bd_dom"/>
</dbReference>
<dbReference type="InterPro" id="IPR000742">
    <property type="entry name" value="EGF-like_dom"/>
</dbReference>
<dbReference type="InterPro" id="IPR000152">
    <property type="entry name" value="EGF-type_Asp/Asn_hydroxyl_site"/>
</dbReference>
<dbReference type="InterPro" id="IPR018097">
    <property type="entry name" value="EGF_Ca-bd_CS"/>
</dbReference>
<dbReference type="InterPro" id="IPR024731">
    <property type="entry name" value="EGF_dom"/>
</dbReference>
<dbReference type="InterPro" id="IPR009030">
    <property type="entry name" value="Growth_fac_rcpt_cys_sf"/>
</dbReference>
<dbReference type="InterPro" id="IPR001791">
    <property type="entry name" value="Laminin_G"/>
</dbReference>
<dbReference type="InterPro" id="IPR049883">
    <property type="entry name" value="NOTCH1_EGF-like"/>
</dbReference>
<dbReference type="InterPro" id="IPR051586">
    <property type="entry name" value="PKC-binding_NELL"/>
</dbReference>
<dbReference type="InterPro" id="IPR048287">
    <property type="entry name" value="TSPN-like_N"/>
</dbReference>
<dbReference type="InterPro" id="IPR001007">
    <property type="entry name" value="VWF_dom"/>
</dbReference>
<dbReference type="PANTHER" id="PTHR24042">
    <property type="entry name" value="NEL HOMOLOG"/>
    <property type="match status" value="1"/>
</dbReference>
<dbReference type="PANTHER" id="PTHR24042:SF0">
    <property type="entry name" value="PROTEIN KINASE C-BINDING PROTEIN NELL2"/>
    <property type="match status" value="1"/>
</dbReference>
<dbReference type="Pfam" id="PF12947">
    <property type="entry name" value="EGF_3"/>
    <property type="match status" value="1"/>
</dbReference>
<dbReference type="Pfam" id="PF07645">
    <property type="entry name" value="EGF_CA"/>
    <property type="match status" value="3"/>
</dbReference>
<dbReference type="Pfam" id="PF02210">
    <property type="entry name" value="Laminin_G_2"/>
    <property type="match status" value="1"/>
</dbReference>
<dbReference type="Pfam" id="PF00093">
    <property type="entry name" value="VWC"/>
    <property type="match status" value="2"/>
</dbReference>
<dbReference type="SMART" id="SM00181">
    <property type="entry name" value="EGF"/>
    <property type="match status" value="6"/>
</dbReference>
<dbReference type="SMART" id="SM00179">
    <property type="entry name" value="EGF_CA"/>
    <property type="match status" value="5"/>
</dbReference>
<dbReference type="SMART" id="SM00282">
    <property type="entry name" value="LamG"/>
    <property type="match status" value="1"/>
</dbReference>
<dbReference type="SMART" id="SM00210">
    <property type="entry name" value="TSPN"/>
    <property type="match status" value="1"/>
</dbReference>
<dbReference type="SMART" id="SM00214">
    <property type="entry name" value="VWC"/>
    <property type="match status" value="3"/>
</dbReference>
<dbReference type="SMART" id="SM00215">
    <property type="entry name" value="VWC_out"/>
    <property type="match status" value="2"/>
</dbReference>
<dbReference type="SUPFAM" id="SSF49899">
    <property type="entry name" value="Concanavalin A-like lectins/glucanases"/>
    <property type="match status" value="1"/>
</dbReference>
<dbReference type="SUPFAM" id="SSF57196">
    <property type="entry name" value="EGF/Laminin"/>
    <property type="match status" value="2"/>
</dbReference>
<dbReference type="SUPFAM" id="SSF57603">
    <property type="entry name" value="FnI-like domain"/>
    <property type="match status" value="2"/>
</dbReference>
<dbReference type="SUPFAM" id="SSF57184">
    <property type="entry name" value="Growth factor receptor domain"/>
    <property type="match status" value="1"/>
</dbReference>
<dbReference type="PROSITE" id="PS00010">
    <property type="entry name" value="ASX_HYDROXYL"/>
    <property type="match status" value="3"/>
</dbReference>
<dbReference type="PROSITE" id="PS00022">
    <property type="entry name" value="EGF_1"/>
    <property type="match status" value="1"/>
</dbReference>
<dbReference type="PROSITE" id="PS01186">
    <property type="entry name" value="EGF_2"/>
    <property type="match status" value="4"/>
</dbReference>
<dbReference type="PROSITE" id="PS50026">
    <property type="entry name" value="EGF_3"/>
    <property type="match status" value="6"/>
</dbReference>
<dbReference type="PROSITE" id="PS01187">
    <property type="entry name" value="EGF_CA"/>
    <property type="match status" value="3"/>
</dbReference>
<dbReference type="PROSITE" id="PS01208">
    <property type="entry name" value="VWFC_1"/>
    <property type="match status" value="2"/>
</dbReference>
<dbReference type="PROSITE" id="PS50184">
    <property type="entry name" value="VWFC_2"/>
    <property type="match status" value="3"/>
</dbReference>
<organism>
    <name type="scientific">Bos taurus</name>
    <name type="common">Bovine</name>
    <dbReference type="NCBI Taxonomy" id="9913"/>
    <lineage>
        <taxon>Eukaryota</taxon>
        <taxon>Metazoa</taxon>
        <taxon>Chordata</taxon>
        <taxon>Craniata</taxon>
        <taxon>Vertebrata</taxon>
        <taxon>Euteleostomi</taxon>
        <taxon>Mammalia</taxon>
        <taxon>Eutheria</taxon>
        <taxon>Laurasiatheria</taxon>
        <taxon>Artiodactyla</taxon>
        <taxon>Ruminantia</taxon>
        <taxon>Pecora</taxon>
        <taxon>Bovidae</taxon>
        <taxon>Bovinae</taxon>
        <taxon>Bos</taxon>
    </lineage>
</organism>
<keyword id="KW-0106">Calcium</keyword>
<keyword id="KW-1015">Disulfide bond</keyword>
<keyword id="KW-0245">EGF-like domain</keyword>
<keyword id="KW-0325">Glycoprotein</keyword>
<keyword id="KW-0479">Metal-binding</keyword>
<keyword id="KW-1185">Reference proteome</keyword>
<keyword id="KW-0677">Repeat</keyword>
<keyword id="KW-0964">Secreted</keyword>
<keyword id="KW-0732">Signal</keyword>
<protein>
    <recommendedName>
        <fullName>Protein kinase C-binding protein NELL2</fullName>
    </recommendedName>
    <alternativeName>
        <fullName>NEL-like protein 2</fullName>
    </alternativeName>
</protein>
<evidence type="ECO:0000250" key="1"/>
<evidence type="ECO:0000250" key="2">
    <source>
        <dbReference type="UniProtKB" id="Q61220"/>
    </source>
</evidence>
<evidence type="ECO:0000250" key="3">
    <source>
        <dbReference type="UniProtKB" id="Q62918"/>
    </source>
</evidence>
<evidence type="ECO:0000250" key="4">
    <source>
        <dbReference type="UniProtKB" id="Q99435"/>
    </source>
</evidence>
<evidence type="ECO:0000255" key="5"/>
<evidence type="ECO:0000255" key="6">
    <source>
        <dbReference type="PROSITE-ProRule" id="PRU00076"/>
    </source>
</evidence>
<evidence type="ECO:0000255" key="7">
    <source>
        <dbReference type="PROSITE-ProRule" id="PRU00220"/>
    </source>
</evidence>
<comment type="function">
    <text evidence="2 3">Plays multiple roles in neural tissues, regulates neuronal proliferation, survival, differentiation, polarization, as well as axon guidance and synaptic functions. Plays an important role in axon development during neuronal differentiation through the MAPK intracellular signaling pathway (By similarity). Via binding to its receptor ROBO3, plays a role in axon guidance, functions as a repulsive guidance cue for commissural axons, helping to steer them across the spinal cord midline (By similarity). Required for neuron survival through the modulation of MAPK signaling pathways too. Involved in the regulation of hypothalamic GNRH secretion and the control of puberty (By similarity).</text>
</comment>
<comment type="function">
    <text evidence="2">Testicular luminal protein that signals through a ROS1-pathway to regulate the epididymal initial segment (IS) maturation, sperm maturation and male fertility.</text>
</comment>
<comment type="subunit">
    <text evidence="1 2 3">Homotrimer (By similarity). Binds to PRKCB (By similarity). Interacts with NICOL1; this interaction triggers epididymal differentiation (By similarity).</text>
</comment>
<comment type="subcellular location">
    <subcellularLocation>
        <location evidence="3">Secreted</location>
    </subcellularLocation>
</comment>
<reference key="1">
    <citation type="submission" date="2007-07" db="EMBL/GenBank/DDBJ databases">
        <authorList>
            <consortium name="NIH - Mammalian Gene Collection (MGC) project"/>
        </authorList>
    </citation>
    <scope>NUCLEOTIDE SEQUENCE [LARGE SCALE MRNA]</scope>
    <source>
        <strain>Hereford</strain>
        <tissue>Hippocampus</tissue>
    </source>
</reference>
<sequence length="816" mass="91270">MESRVLLRTFCLLFGLGAVWGLGVDPSLQIDVLTELELGESTTGVRQVPGLHNGTKAFLFQDTPRSIKASTATAEQFFQKLRNKHEFTILVTLKQTHLNSGVILSIHHLDHRYLELESSGHRNEVRLHYRSGSHHPHTEVFPYILADDKWHKLSLAISASHLILHIDCNKIYERVVEKPSTDLPLGTSFWLGQRNNAHGYFKGIMQDVQLLVMPQGFIAQCPDLNRTCPTCNDFHGLVQKIMELQDILAKTSAKLSRAEQRMNRLDQCYCERTCTMKGTTYREFESWTDGCKNCTCLNGTIQCETLICPNPDCPLKSAPAYVDGKCCKECKSICQFQGRTYFEGQRNTVYSSSGVCVLYECKDQSMKLVESSGCPALDCAESHQITLSHSCCKVCKGYDFCSERHNCMENSVCRNLNDRAVCSCRDGFRALREDNAYCEDIDECAEGRHYCRENTMCVNTPGSFMCICKTGYIRIDDYSCTEHDECVTNQHNCDENALCFNTVGGHNCVCKPGYTGNGTTCKAFCQDGCRNGGACIAANVCACPQGFTGHSCETDIDECSDGFVQCDSRANCINLPGWYHCECRDGYHDNGMFSPSGESCEDIDECGTGRHSCANDTICFNLDGGYDCRCPHGKNCTGDCIHDGKIKHNGQIWVLENDRCSVCSCQNGFVMCRRMVCDCENPTVDLFCCPECDPRLSSQCLHQNGETLYNSGDTWVQNCQQCRCLQGEVDCWPLPCPEVECEFSVLPENECCPRCVTDPCQADTIRNDITKTCLDEMNVVRFTGSSWIKHGTECTLCQCKNGHICCSVDPQCLQEL</sequence>
<name>NELL2_BOVIN</name>
<accession>A6QR11</accession>